<evidence type="ECO:0000250" key="1"/>
<evidence type="ECO:0000255" key="2"/>
<evidence type="ECO:0000256" key="3">
    <source>
        <dbReference type="SAM" id="MobiDB-lite"/>
    </source>
</evidence>
<evidence type="ECO:0000305" key="4"/>
<keyword id="KW-0044">Antibiotic</keyword>
<keyword id="KW-0929">Antimicrobial</keyword>
<keyword id="KW-0211">Defensin</keyword>
<keyword id="KW-1015">Disulfide bond</keyword>
<keyword id="KW-1185">Reference proteome</keyword>
<keyword id="KW-0964">Secreted</keyword>
<keyword id="KW-0732">Signal</keyword>
<comment type="function">
    <text evidence="1">May have microbicidal activities.</text>
</comment>
<comment type="subcellular location">
    <subcellularLocation>
        <location evidence="1">Secreted</location>
    </subcellularLocation>
</comment>
<comment type="similarity">
    <text evidence="4">Belongs to the alpha-defensin family.</text>
</comment>
<dbReference type="EMBL" id="AY746429">
    <property type="protein sequence ID" value="AAW78338.1"/>
    <property type="molecule type" value="mRNA"/>
</dbReference>
<dbReference type="CCDS" id="CCDS40281.1"/>
<dbReference type="RefSeq" id="NP_001019396.1">
    <property type="nucleotide sequence ID" value="NM_001024225.2"/>
</dbReference>
<dbReference type="SMR" id="Q5G865"/>
<dbReference type="FunCoup" id="Q5G865">
    <property type="interactions" value="42"/>
</dbReference>
<dbReference type="STRING" id="10090.ENSMUSP00000079376"/>
<dbReference type="PaxDb" id="10090-ENSMUSP00000079376"/>
<dbReference type="DNASU" id="503491"/>
<dbReference type="Ensembl" id="ENSMUST00000080533.6">
    <property type="protein sequence ID" value="ENSMUSP00000079376.6"/>
    <property type="gene ID" value="ENSMUSG00000064213.6"/>
</dbReference>
<dbReference type="GeneID" id="503491"/>
<dbReference type="KEGG" id="mmu:503491"/>
<dbReference type="AGR" id="MGI:3630383"/>
<dbReference type="CTD" id="503491"/>
<dbReference type="MGI" id="MGI:3630383">
    <property type="gene designation" value="Defa24"/>
</dbReference>
<dbReference type="VEuPathDB" id="HostDB:ENSMUSG00000064213"/>
<dbReference type="eggNOG" id="ENOG502T2EX">
    <property type="taxonomic scope" value="Eukaryota"/>
</dbReference>
<dbReference type="GeneTree" id="ENSGT00940000153268"/>
<dbReference type="HOGENOM" id="CLU_160803_1_0_1"/>
<dbReference type="InParanoid" id="Q5G865"/>
<dbReference type="OMA" id="RSFTCHC"/>
<dbReference type="OrthoDB" id="9625549at2759"/>
<dbReference type="PhylomeDB" id="Q5G865"/>
<dbReference type="TreeFam" id="TF338414"/>
<dbReference type="Reactome" id="R-MMU-1461973">
    <property type="pathway name" value="Defensins"/>
</dbReference>
<dbReference type="Reactome" id="R-MMU-1462054">
    <property type="pathway name" value="Alpha-defensins"/>
</dbReference>
<dbReference type="Reactome" id="R-MMU-6798695">
    <property type="pathway name" value="Neutrophil degranulation"/>
</dbReference>
<dbReference type="BioGRID-ORCS" id="503491">
    <property type="hits" value="3 hits in 25 CRISPR screens"/>
</dbReference>
<dbReference type="PRO" id="PR:Q5G865"/>
<dbReference type="Proteomes" id="UP000000589">
    <property type="component" value="Chromosome 8"/>
</dbReference>
<dbReference type="RNAct" id="Q5G865">
    <property type="molecule type" value="protein"/>
</dbReference>
<dbReference type="Bgee" id="ENSMUSG00000064213">
    <property type="expression patterns" value="Expressed in ileum and 23 other cell types or tissues"/>
</dbReference>
<dbReference type="GO" id="GO:0005615">
    <property type="term" value="C:extracellular space"/>
    <property type="evidence" value="ECO:0000314"/>
    <property type="project" value="MGI"/>
</dbReference>
<dbReference type="GO" id="GO:0019731">
    <property type="term" value="P:antibacterial humoral response"/>
    <property type="evidence" value="ECO:0000314"/>
    <property type="project" value="MGI"/>
</dbReference>
<dbReference type="InterPro" id="IPR016327">
    <property type="entry name" value="Alpha-defensin"/>
</dbReference>
<dbReference type="InterPro" id="IPR006081">
    <property type="entry name" value="Alpha-defensin_C"/>
</dbReference>
<dbReference type="InterPro" id="IPR002366">
    <property type="entry name" value="Alpha-defensin_N"/>
</dbReference>
<dbReference type="InterPro" id="IPR006080">
    <property type="entry name" value="Beta/alpha-defensin_C"/>
</dbReference>
<dbReference type="PANTHER" id="PTHR11876">
    <property type="entry name" value="ALPHA-DEFENSIN 1"/>
    <property type="match status" value="1"/>
</dbReference>
<dbReference type="PANTHER" id="PTHR11876:SF2">
    <property type="entry name" value="ALPHA-DEFENSIN 1-RELATED"/>
    <property type="match status" value="1"/>
</dbReference>
<dbReference type="Pfam" id="PF00323">
    <property type="entry name" value="Defensin_1"/>
    <property type="match status" value="1"/>
</dbReference>
<dbReference type="Pfam" id="PF00879">
    <property type="entry name" value="Defensin_propep"/>
    <property type="match status" value="1"/>
</dbReference>
<dbReference type="PIRSF" id="PIRSF001875">
    <property type="entry name" value="Alpha-defensin"/>
    <property type="match status" value="1"/>
</dbReference>
<dbReference type="SMART" id="SM01418">
    <property type="entry name" value="Defensin_propep"/>
    <property type="match status" value="1"/>
</dbReference>
<dbReference type="SMART" id="SM00048">
    <property type="entry name" value="DEFSN"/>
    <property type="match status" value="1"/>
</dbReference>
<dbReference type="SUPFAM" id="SSF57392">
    <property type="entry name" value="Defensin-like"/>
    <property type="match status" value="1"/>
</dbReference>
<dbReference type="PROSITE" id="PS00269">
    <property type="entry name" value="DEFENSIN"/>
    <property type="match status" value="1"/>
</dbReference>
<reference key="1">
    <citation type="journal article" date="2004" name="Physiol. Genomics">
        <title>Rapid evolution and diversification of mammalian alpha-defensins as revealed by comparative analysis of rodent and primate genes.</title>
        <authorList>
            <person name="Patil A."/>
            <person name="Hughes A.L."/>
            <person name="Zhang G."/>
        </authorList>
    </citation>
    <scope>NUCLEOTIDE SEQUENCE [MRNA]</scope>
</reference>
<gene>
    <name type="primary">Defa24</name>
    <name type="synonym">Defcr24</name>
</gene>
<organism>
    <name type="scientific">Mus musculus</name>
    <name type="common">Mouse</name>
    <dbReference type="NCBI Taxonomy" id="10090"/>
    <lineage>
        <taxon>Eukaryota</taxon>
        <taxon>Metazoa</taxon>
        <taxon>Chordata</taxon>
        <taxon>Craniata</taxon>
        <taxon>Vertebrata</taxon>
        <taxon>Euteleostomi</taxon>
        <taxon>Mammalia</taxon>
        <taxon>Eutheria</taxon>
        <taxon>Euarchontoglires</taxon>
        <taxon>Glires</taxon>
        <taxon>Rodentia</taxon>
        <taxon>Myomorpha</taxon>
        <taxon>Muroidea</taxon>
        <taxon>Muridae</taxon>
        <taxon>Murinae</taxon>
        <taxon>Mus</taxon>
        <taxon>Mus</taxon>
    </lineage>
</organism>
<accession>Q5G865</accession>
<name>DFA24_MOUSE</name>
<protein>
    <recommendedName>
        <fullName>Alpha-defensin 24</fullName>
    </recommendedName>
    <alternativeName>
        <fullName>Defensin-related cryptdin-24</fullName>
    </alternativeName>
</protein>
<sequence length="93" mass="10327">MKTLILLSALVLLAFQVQADPIQNTDEETKTEEQPGEEDQAVSVSFGDPEGASLQEESLRDLVCYCRARGCKGRERMNGTCSKGHLLYMLCCR</sequence>
<feature type="signal peptide" evidence="2">
    <location>
        <begin position="1"/>
        <end position="19"/>
    </location>
</feature>
<feature type="propeptide" id="PRO_0000300074" evidence="1">
    <location>
        <begin position="20"/>
        <end position="58"/>
    </location>
</feature>
<feature type="peptide" id="PRO_0000300075" description="Alpha-defensin 24">
    <location>
        <begin position="59"/>
        <end position="92"/>
    </location>
</feature>
<feature type="region of interest" description="Disordered" evidence="3">
    <location>
        <begin position="23"/>
        <end position="54"/>
    </location>
</feature>
<feature type="disulfide bond" evidence="1">
    <location>
        <begin position="64"/>
        <end position="92"/>
    </location>
</feature>
<feature type="disulfide bond" evidence="1">
    <location>
        <begin position="66"/>
        <end position="81"/>
    </location>
</feature>
<feature type="disulfide bond" evidence="1">
    <location>
        <begin position="71"/>
        <end position="91"/>
    </location>
</feature>
<proteinExistence type="inferred from homology"/>